<dbReference type="SMR" id="P0DV95"/>
<dbReference type="GO" id="GO:0005576">
    <property type="term" value="C:extracellular region"/>
    <property type="evidence" value="ECO:0007669"/>
    <property type="project" value="UniProtKB-SubCell"/>
</dbReference>
<dbReference type="GO" id="GO:0017080">
    <property type="term" value="F:sodium channel regulator activity"/>
    <property type="evidence" value="ECO:0007669"/>
    <property type="project" value="UniProtKB-KW"/>
</dbReference>
<dbReference type="GO" id="GO:0090729">
    <property type="term" value="F:toxin activity"/>
    <property type="evidence" value="ECO:0007669"/>
    <property type="project" value="UniProtKB-KW"/>
</dbReference>
<feature type="signal peptide" evidence="2">
    <location>
        <begin position="1"/>
        <end position="20"/>
    </location>
</feature>
<feature type="propeptide" id="PRO_0000455813" evidence="5">
    <location>
        <begin position="21"/>
        <end position="35"/>
    </location>
</feature>
<feature type="chain" id="PRO_0000455814" description="Mu-Sparatoxin-Hp1" evidence="3">
    <location>
        <begin position="36"/>
        <end position="82"/>
    </location>
</feature>
<feature type="modified residue" description="Leucine amide" evidence="3">
    <location>
        <position position="82"/>
    </location>
</feature>
<feature type="disulfide bond" evidence="1">
    <location>
        <begin position="54"/>
        <end position="68"/>
    </location>
</feature>
<feature type="disulfide bond" evidence="1">
    <location>
        <begin position="61"/>
        <end position="73"/>
    </location>
</feature>
<feature type="disulfide bond" evidence="1">
    <location>
        <begin position="67"/>
        <end position="78"/>
    </location>
</feature>
<name>TX1_HETPN</name>
<accession>P0DV95</accession>
<keyword id="KW-0027">Amidation</keyword>
<keyword id="KW-0903">Direct protein sequencing</keyword>
<keyword id="KW-1015">Disulfide bond</keyword>
<keyword id="KW-0872">Ion channel impairing toxin</keyword>
<keyword id="KW-0960">Knottin</keyword>
<keyword id="KW-0528">Neurotoxin</keyword>
<keyword id="KW-0964">Secreted</keyword>
<keyword id="KW-0732">Signal</keyword>
<keyword id="KW-0800">Toxin</keyword>
<keyword id="KW-0738">Voltage-gated sodium channel impairing toxin</keyword>
<sequence length="84" mass="8892">MKIAIVMTLLLVAFSTASFAIEPIERAALDLVMARADSGGDAGGDAGADDEGSCKWMFQSCEPPAKCCDGWTCYKGRCNLILGR</sequence>
<comment type="function">
    <text evidence="3">Weakly nhibits voltage-gated sodium channels Nav1.7/SCN9A. High concentration of the toxin (3 uM) inhibits Nav1.7/SCN9A currents by 79%.</text>
</comment>
<comment type="subcellular location">
    <subcellularLocation>
        <location evidence="3">Secreted</location>
    </subcellularLocation>
</comment>
<comment type="tissue specificity">
    <text evidence="6">Expressed by the venom gland.</text>
</comment>
<comment type="domain">
    <text evidence="5">The presence of a 'disulfide through disulfide knot' structurally defines this protein as a knottin.</text>
</comment>
<comment type="mass spectrometry" mass="4884.7" method="MALDI" evidence="3"/>
<comment type="similarity">
    <text evidence="5">Belongs to the neurotoxin 10 (Hwtx-1) family.</text>
</comment>
<reference key="1">
    <citation type="journal article" date="2022" name="Toxins">
        <title>Molecular diversity of peptide toxins in the venom of spider heteropoda pingtungensis as revealed by cdna library and transcriptome sequencing analysis.</title>
        <authorList>
            <person name="Liao Q."/>
            <person name="Kong X."/>
            <person name="Luo G."/>
            <person name="Wu X."/>
            <person name="Li Y."/>
            <person name="Liu Q."/>
            <person name="Tang C."/>
            <person name="Liu Z."/>
        </authorList>
    </citation>
    <scope>NUCLEOTIDE SEQUENCE [MRNA]</scope>
    <scope>PARTIAL PROTEIN SEQUENCE</scope>
    <scope>AMIDATION AT LEU-82</scope>
    <scope>SUBCELLULAR LOCATION</scope>
    <scope>MASS SPECTROMETRY</scope>
    <source>
        <tissue>Venom</tissue>
        <tissue>Venom gland</tissue>
    </source>
</reference>
<protein>
    <recommendedName>
        <fullName evidence="4">Mu-Sparatoxin-Hp1</fullName>
    </recommendedName>
    <alternativeName>
        <fullName evidence="4">HptTx-208</fullName>
    </alternativeName>
</protein>
<organism>
    <name type="scientific">Heteropoda pingtungensis</name>
    <name type="common">Pingtung huntsman spider</name>
    <dbReference type="NCBI Taxonomy" id="2926465"/>
    <lineage>
        <taxon>Eukaryota</taxon>
        <taxon>Metazoa</taxon>
        <taxon>Ecdysozoa</taxon>
        <taxon>Arthropoda</taxon>
        <taxon>Chelicerata</taxon>
        <taxon>Arachnida</taxon>
        <taxon>Araneae</taxon>
        <taxon>Araneomorphae</taxon>
        <taxon>Entelegynae</taxon>
        <taxon>Dionycha</taxon>
        <taxon>Sparassidae</taxon>
        <taxon>Heteropoda</taxon>
    </lineage>
</organism>
<proteinExistence type="evidence at protein level"/>
<evidence type="ECO:0000250" key="1">
    <source>
        <dbReference type="UniProtKB" id="P60590"/>
    </source>
</evidence>
<evidence type="ECO:0000255" key="2"/>
<evidence type="ECO:0000269" key="3">
    <source>
    </source>
</evidence>
<evidence type="ECO:0000303" key="4">
    <source>
    </source>
</evidence>
<evidence type="ECO:0000305" key="5"/>
<evidence type="ECO:0000305" key="6">
    <source>
    </source>
</evidence>